<dbReference type="EC" id="3.5.1.96" evidence="1"/>
<dbReference type="EMBL" id="CP000086">
    <property type="protein sequence ID" value="ABC36400.1"/>
    <property type="molecule type" value="Genomic_DNA"/>
</dbReference>
<dbReference type="RefSeq" id="WP_009890068.1">
    <property type="nucleotide sequence ID" value="NZ_CP008785.1"/>
</dbReference>
<dbReference type="SMR" id="Q2SXN7"/>
<dbReference type="GeneID" id="45121509"/>
<dbReference type="KEGG" id="bte:BTH_I1780"/>
<dbReference type="HOGENOM" id="CLU_071608_0_0_4"/>
<dbReference type="UniPathway" id="UPA00185">
    <property type="reaction ID" value="UER00283"/>
</dbReference>
<dbReference type="Proteomes" id="UP000001930">
    <property type="component" value="Chromosome I"/>
</dbReference>
<dbReference type="GO" id="GO:0016788">
    <property type="term" value="F:hydrolase activity, acting on ester bonds"/>
    <property type="evidence" value="ECO:0007669"/>
    <property type="project" value="UniProtKB-UniRule"/>
</dbReference>
<dbReference type="GO" id="GO:0009017">
    <property type="term" value="F:succinylglutamate desuccinylase activity"/>
    <property type="evidence" value="ECO:0007669"/>
    <property type="project" value="UniProtKB-EC"/>
</dbReference>
<dbReference type="GO" id="GO:0008270">
    <property type="term" value="F:zinc ion binding"/>
    <property type="evidence" value="ECO:0007669"/>
    <property type="project" value="UniProtKB-UniRule"/>
</dbReference>
<dbReference type="GO" id="GO:0019544">
    <property type="term" value="P:arginine catabolic process to glutamate"/>
    <property type="evidence" value="ECO:0007669"/>
    <property type="project" value="UniProtKB-UniRule"/>
</dbReference>
<dbReference type="GO" id="GO:0019545">
    <property type="term" value="P:arginine catabolic process to succinate"/>
    <property type="evidence" value="ECO:0007669"/>
    <property type="project" value="UniProtKB-UniRule"/>
</dbReference>
<dbReference type="CDD" id="cd03855">
    <property type="entry name" value="M14_ASTE"/>
    <property type="match status" value="1"/>
</dbReference>
<dbReference type="Gene3D" id="3.40.630.10">
    <property type="entry name" value="Zn peptidases"/>
    <property type="match status" value="1"/>
</dbReference>
<dbReference type="HAMAP" id="MF_00767">
    <property type="entry name" value="Arg_catab_AstE"/>
    <property type="match status" value="1"/>
</dbReference>
<dbReference type="InterPro" id="IPR050178">
    <property type="entry name" value="AspA/AstE_fam"/>
</dbReference>
<dbReference type="InterPro" id="IPR055438">
    <property type="entry name" value="AstE_AspA_cat"/>
</dbReference>
<dbReference type="InterPro" id="IPR007036">
    <property type="entry name" value="Aste_AspA_hybrid_dom"/>
</dbReference>
<dbReference type="InterPro" id="IPR016681">
    <property type="entry name" value="SuccinylGlu_desuccinylase"/>
</dbReference>
<dbReference type="NCBIfam" id="TIGR03242">
    <property type="entry name" value="arg_catab_astE"/>
    <property type="match status" value="1"/>
</dbReference>
<dbReference type="NCBIfam" id="NF003706">
    <property type="entry name" value="PRK05324.1"/>
    <property type="match status" value="1"/>
</dbReference>
<dbReference type="PANTHER" id="PTHR15162">
    <property type="entry name" value="ASPARTOACYLASE"/>
    <property type="match status" value="1"/>
</dbReference>
<dbReference type="PANTHER" id="PTHR15162:SF7">
    <property type="entry name" value="SUCCINYLGLUTAMATE DESUCCINYLASE"/>
    <property type="match status" value="1"/>
</dbReference>
<dbReference type="Pfam" id="PF24827">
    <property type="entry name" value="AstE_AspA_cat"/>
    <property type="match status" value="1"/>
</dbReference>
<dbReference type="Pfam" id="PF04952">
    <property type="entry name" value="AstE_AspA_hybrid"/>
    <property type="match status" value="1"/>
</dbReference>
<dbReference type="PIRSF" id="PIRSF017020">
    <property type="entry name" value="AstE"/>
    <property type="match status" value="1"/>
</dbReference>
<dbReference type="SUPFAM" id="SSF53187">
    <property type="entry name" value="Zn-dependent exopeptidases"/>
    <property type="match status" value="1"/>
</dbReference>
<accession>Q2SXN7</accession>
<protein>
    <recommendedName>
        <fullName evidence="1">Succinylglutamate desuccinylase</fullName>
        <ecNumber evidence="1">3.5.1.96</ecNumber>
    </recommendedName>
</protein>
<reference key="1">
    <citation type="journal article" date="2005" name="BMC Genomics">
        <title>Bacterial genome adaptation to niches: divergence of the potential virulence genes in three Burkholderia species of different survival strategies.</title>
        <authorList>
            <person name="Kim H.S."/>
            <person name="Schell M.A."/>
            <person name="Yu Y."/>
            <person name="Ulrich R.L."/>
            <person name="Sarria S.H."/>
            <person name="Nierman W.C."/>
            <person name="DeShazer D."/>
        </authorList>
    </citation>
    <scope>NUCLEOTIDE SEQUENCE [LARGE SCALE GENOMIC DNA]</scope>
    <source>
        <strain>ATCC 700388 / DSM 13276 / CCUG 48851 / CIP 106301 / E264</strain>
    </source>
</reference>
<gene>
    <name evidence="1" type="primary">astE</name>
    <name type="ordered locus">BTH_I1780</name>
</gene>
<keyword id="KW-0056">Arginine metabolism</keyword>
<keyword id="KW-0378">Hydrolase</keyword>
<keyword id="KW-0479">Metal-binding</keyword>
<keyword id="KW-0862">Zinc</keyword>
<evidence type="ECO:0000255" key="1">
    <source>
        <dbReference type="HAMAP-Rule" id="MF_00767"/>
    </source>
</evidence>
<sequence length="349" mass="37615">MISSADSGRDAAWLDDFLALTLAGGTPPAHAGECAAHAVRWRWLGDGLLQFEPVDATRRMQSVLVSAGVHGDETAPIELLSMLVRDIAHGALPLRCRLLVALGNPGAMRAGERYLDDDLNRLFGGRHAPLATSREAPRAAQLEAAASAFFATAGRARGARWHIDMHTAIRASVFEQFALLPHTGEPPTRTMFEWLGEARIAAVLLHTAKGSTFSHFTAQTCGALACTLELGKVMPFGANDLSRFARADAAVRNLVSGRRDAARAALPRVFTVVDQITKQSDALELFVEKDVPNFTPFAQGTLLARDGDYRYAVRHAQERIVFPNPSVKPGLRAGLLVVETTLDTHAALA</sequence>
<proteinExistence type="inferred from homology"/>
<comment type="function">
    <text evidence="1">Transforms N(2)-succinylglutamate into succinate and glutamate.</text>
</comment>
<comment type="catalytic activity">
    <reaction evidence="1">
        <text>N-succinyl-L-glutamate + H2O = L-glutamate + succinate</text>
        <dbReference type="Rhea" id="RHEA:15169"/>
        <dbReference type="ChEBI" id="CHEBI:15377"/>
        <dbReference type="ChEBI" id="CHEBI:29985"/>
        <dbReference type="ChEBI" id="CHEBI:30031"/>
        <dbReference type="ChEBI" id="CHEBI:58763"/>
        <dbReference type="EC" id="3.5.1.96"/>
    </reaction>
</comment>
<comment type="cofactor">
    <cofactor evidence="1">
        <name>Zn(2+)</name>
        <dbReference type="ChEBI" id="CHEBI:29105"/>
    </cofactor>
    <text evidence="1">Binds 1 zinc ion per subunit.</text>
</comment>
<comment type="pathway">
    <text evidence="1">Amino-acid degradation; L-arginine degradation via AST pathway; L-glutamate and succinate from L-arginine: step 5/5.</text>
</comment>
<comment type="similarity">
    <text evidence="1">Belongs to the AspA/AstE family. Succinylglutamate desuccinylase subfamily.</text>
</comment>
<feature type="chain" id="PRO_0000257709" description="Succinylglutamate desuccinylase">
    <location>
        <begin position="1"/>
        <end position="349"/>
    </location>
</feature>
<feature type="active site" evidence="1">
    <location>
        <position position="229"/>
    </location>
</feature>
<feature type="binding site" evidence="1">
    <location>
        <position position="70"/>
    </location>
    <ligand>
        <name>Zn(2+)</name>
        <dbReference type="ChEBI" id="CHEBI:29105"/>
    </ligand>
</feature>
<feature type="binding site" evidence="1">
    <location>
        <position position="73"/>
    </location>
    <ligand>
        <name>Zn(2+)</name>
        <dbReference type="ChEBI" id="CHEBI:29105"/>
    </ligand>
</feature>
<feature type="binding site" evidence="1">
    <location>
        <position position="166"/>
    </location>
    <ligand>
        <name>Zn(2+)</name>
        <dbReference type="ChEBI" id="CHEBI:29105"/>
    </ligand>
</feature>
<name>ASTE_BURTA</name>
<organism>
    <name type="scientific">Burkholderia thailandensis (strain ATCC 700388 / DSM 13276 / CCUG 48851 / CIP 106301 / E264)</name>
    <dbReference type="NCBI Taxonomy" id="271848"/>
    <lineage>
        <taxon>Bacteria</taxon>
        <taxon>Pseudomonadati</taxon>
        <taxon>Pseudomonadota</taxon>
        <taxon>Betaproteobacteria</taxon>
        <taxon>Burkholderiales</taxon>
        <taxon>Burkholderiaceae</taxon>
        <taxon>Burkholderia</taxon>
        <taxon>pseudomallei group</taxon>
    </lineage>
</organism>